<feature type="chain" id="PRO_0000176670" description="Large ribosomal subunit protein bL9">
    <location>
        <begin position="1"/>
        <end position="171"/>
    </location>
</feature>
<organism>
    <name type="scientific">Rickettsia conorii (strain ATCC VR-613 / Malish 7)</name>
    <dbReference type="NCBI Taxonomy" id="272944"/>
    <lineage>
        <taxon>Bacteria</taxon>
        <taxon>Pseudomonadati</taxon>
        <taxon>Pseudomonadota</taxon>
        <taxon>Alphaproteobacteria</taxon>
        <taxon>Rickettsiales</taxon>
        <taxon>Rickettsiaceae</taxon>
        <taxon>Rickettsieae</taxon>
        <taxon>Rickettsia</taxon>
        <taxon>spotted fever group</taxon>
    </lineage>
</organism>
<evidence type="ECO:0000255" key="1">
    <source>
        <dbReference type="HAMAP-Rule" id="MF_00503"/>
    </source>
</evidence>
<evidence type="ECO:0000305" key="2"/>
<proteinExistence type="inferred from homology"/>
<reference key="1">
    <citation type="journal article" date="2001" name="Science">
        <title>Mechanisms of evolution in Rickettsia conorii and R. prowazekii.</title>
        <authorList>
            <person name="Ogata H."/>
            <person name="Audic S."/>
            <person name="Renesto-Audiffren P."/>
            <person name="Fournier P.-E."/>
            <person name="Barbe V."/>
            <person name="Samson D."/>
            <person name="Roux V."/>
            <person name="Cossart P."/>
            <person name="Weissenbach J."/>
            <person name="Claverie J.-M."/>
            <person name="Raoult D."/>
        </authorList>
    </citation>
    <scope>NUCLEOTIDE SEQUENCE [LARGE SCALE GENOMIC DNA]</scope>
    <source>
        <strain>ATCC VR-613 / Malish 7</strain>
    </source>
</reference>
<gene>
    <name evidence="1" type="primary">rplI</name>
    <name type="ordered locus">RC0066</name>
</gene>
<accession>Q92JK1</accession>
<comment type="function">
    <text evidence="1">Binds to the 23S rRNA.</text>
</comment>
<comment type="similarity">
    <text evidence="1">Belongs to the bacterial ribosomal protein bL9 family.</text>
</comment>
<protein>
    <recommendedName>
        <fullName evidence="1">Large ribosomal subunit protein bL9</fullName>
    </recommendedName>
    <alternativeName>
        <fullName evidence="2">50S ribosomal protein L9</fullName>
    </alternativeName>
</protein>
<dbReference type="EMBL" id="AE006914">
    <property type="protein sequence ID" value="AAL02604.1"/>
    <property type="molecule type" value="Genomic_DNA"/>
</dbReference>
<dbReference type="PIR" id="B97708">
    <property type="entry name" value="B97708"/>
</dbReference>
<dbReference type="RefSeq" id="WP_010976751.1">
    <property type="nucleotide sequence ID" value="NC_003103.1"/>
</dbReference>
<dbReference type="SMR" id="Q92JK1"/>
<dbReference type="GeneID" id="928599"/>
<dbReference type="KEGG" id="rco:RC0066"/>
<dbReference type="PATRIC" id="fig|272944.4.peg.77"/>
<dbReference type="HOGENOM" id="CLU_078938_3_0_5"/>
<dbReference type="Proteomes" id="UP000000816">
    <property type="component" value="Chromosome"/>
</dbReference>
<dbReference type="GO" id="GO:1990904">
    <property type="term" value="C:ribonucleoprotein complex"/>
    <property type="evidence" value="ECO:0007669"/>
    <property type="project" value="UniProtKB-KW"/>
</dbReference>
<dbReference type="GO" id="GO:0005840">
    <property type="term" value="C:ribosome"/>
    <property type="evidence" value="ECO:0007669"/>
    <property type="project" value="UniProtKB-KW"/>
</dbReference>
<dbReference type="GO" id="GO:0019843">
    <property type="term" value="F:rRNA binding"/>
    <property type="evidence" value="ECO:0007669"/>
    <property type="project" value="UniProtKB-UniRule"/>
</dbReference>
<dbReference type="GO" id="GO:0003735">
    <property type="term" value="F:structural constituent of ribosome"/>
    <property type="evidence" value="ECO:0007669"/>
    <property type="project" value="InterPro"/>
</dbReference>
<dbReference type="GO" id="GO:0006412">
    <property type="term" value="P:translation"/>
    <property type="evidence" value="ECO:0007669"/>
    <property type="project" value="UniProtKB-UniRule"/>
</dbReference>
<dbReference type="Gene3D" id="3.10.430.100">
    <property type="entry name" value="Ribosomal protein L9, C-terminal domain"/>
    <property type="match status" value="1"/>
</dbReference>
<dbReference type="Gene3D" id="3.40.5.10">
    <property type="entry name" value="Ribosomal protein L9, N-terminal domain"/>
    <property type="match status" value="1"/>
</dbReference>
<dbReference type="HAMAP" id="MF_00503">
    <property type="entry name" value="Ribosomal_bL9"/>
    <property type="match status" value="1"/>
</dbReference>
<dbReference type="InterPro" id="IPR000244">
    <property type="entry name" value="Ribosomal_bL9"/>
</dbReference>
<dbReference type="InterPro" id="IPR009027">
    <property type="entry name" value="Ribosomal_bL9/RNase_H1_N"/>
</dbReference>
<dbReference type="InterPro" id="IPR020594">
    <property type="entry name" value="Ribosomal_bL9_bac/chp"/>
</dbReference>
<dbReference type="InterPro" id="IPR020069">
    <property type="entry name" value="Ribosomal_bL9_C"/>
</dbReference>
<dbReference type="InterPro" id="IPR036791">
    <property type="entry name" value="Ribosomal_bL9_C_sf"/>
</dbReference>
<dbReference type="InterPro" id="IPR020070">
    <property type="entry name" value="Ribosomal_bL9_N"/>
</dbReference>
<dbReference type="InterPro" id="IPR036935">
    <property type="entry name" value="Ribosomal_bL9_N_sf"/>
</dbReference>
<dbReference type="NCBIfam" id="TIGR00158">
    <property type="entry name" value="L9"/>
    <property type="match status" value="1"/>
</dbReference>
<dbReference type="PANTHER" id="PTHR21368">
    <property type="entry name" value="50S RIBOSOMAL PROTEIN L9"/>
    <property type="match status" value="1"/>
</dbReference>
<dbReference type="Pfam" id="PF03948">
    <property type="entry name" value="Ribosomal_L9_C"/>
    <property type="match status" value="1"/>
</dbReference>
<dbReference type="Pfam" id="PF01281">
    <property type="entry name" value="Ribosomal_L9_N"/>
    <property type="match status" value="1"/>
</dbReference>
<dbReference type="SUPFAM" id="SSF55658">
    <property type="entry name" value="L9 N-domain-like"/>
    <property type="match status" value="1"/>
</dbReference>
<dbReference type="SUPFAM" id="SSF55653">
    <property type="entry name" value="Ribosomal protein L9 C-domain"/>
    <property type="match status" value="1"/>
</dbReference>
<dbReference type="PROSITE" id="PS00651">
    <property type="entry name" value="RIBOSOMAL_L9"/>
    <property type="match status" value="1"/>
</dbReference>
<keyword id="KW-0687">Ribonucleoprotein</keyword>
<keyword id="KW-0689">Ribosomal protein</keyword>
<keyword id="KW-0694">RNA-binding</keyword>
<keyword id="KW-0699">rRNA-binding</keyword>
<sequence length="171" mass="19413">MEIILIKPVRKLGKIGDILKVADGFGRNYLLPQKLAIRATEPNKELIVKQKHEFEAKDKQIREEVEKINALIKDQQLVFIRQTSNDGKLFGSVTNKEIADKLSENISYNISHSNIILDKQIKSTGIYTVEIRLHAELNAIVTVIVARSESEAQDYLREQKTETSEDLAELA</sequence>
<name>RL9_RICCN</name>